<gene>
    <name evidence="4" type="primary">ZNF723</name>
</gene>
<comment type="function">
    <text evidence="3">May be involved in transcriptional regulation.</text>
</comment>
<comment type="subcellular location">
    <subcellularLocation>
        <location evidence="3">Nucleus</location>
    </subcellularLocation>
</comment>
<comment type="similarity">
    <text evidence="3">Belongs to the krueppel C2H2-type zinc-finger protein family.</text>
</comment>
<evidence type="ECO:0000255" key="1">
    <source>
        <dbReference type="PROSITE-ProRule" id="PRU00042"/>
    </source>
</evidence>
<evidence type="ECO:0000255" key="2">
    <source>
        <dbReference type="PROSITE-ProRule" id="PRU00119"/>
    </source>
</evidence>
<evidence type="ECO:0000305" key="3"/>
<evidence type="ECO:0000312" key="4">
    <source>
        <dbReference type="HGNC" id="HGNC:32286"/>
    </source>
</evidence>
<reference key="1">
    <citation type="journal article" date="2004" name="Nature">
        <title>The DNA sequence and biology of human chromosome 19.</title>
        <authorList>
            <person name="Grimwood J."/>
            <person name="Gordon L.A."/>
            <person name="Olsen A.S."/>
            <person name="Terry A."/>
            <person name="Schmutz J."/>
            <person name="Lamerdin J.E."/>
            <person name="Hellsten U."/>
            <person name="Goodstein D."/>
            <person name="Couronne O."/>
            <person name="Tran-Gyamfi M."/>
            <person name="Aerts A."/>
            <person name="Altherr M."/>
            <person name="Ashworth L."/>
            <person name="Bajorek E."/>
            <person name="Black S."/>
            <person name="Branscomb E."/>
            <person name="Caenepeel S."/>
            <person name="Carrano A.V."/>
            <person name="Caoile C."/>
            <person name="Chan Y.M."/>
            <person name="Christensen M."/>
            <person name="Cleland C.A."/>
            <person name="Copeland A."/>
            <person name="Dalin E."/>
            <person name="Dehal P."/>
            <person name="Denys M."/>
            <person name="Detter J.C."/>
            <person name="Escobar J."/>
            <person name="Flowers D."/>
            <person name="Fotopulos D."/>
            <person name="Garcia C."/>
            <person name="Georgescu A.M."/>
            <person name="Glavina T."/>
            <person name="Gomez M."/>
            <person name="Gonzales E."/>
            <person name="Groza M."/>
            <person name="Hammon N."/>
            <person name="Hawkins T."/>
            <person name="Haydu L."/>
            <person name="Ho I."/>
            <person name="Huang W."/>
            <person name="Israni S."/>
            <person name="Jett J."/>
            <person name="Kadner K."/>
            <person name="Kimball H."/>
            <person name="Kobayashi A."/>
            <person name="Larionov V."/>
            <person name="Leem S.-H."/>
            <person name="Lopez F."/>
            <person name="Lou Y."/>
            <person name="Lowry S."/>
            <person name="Malfatti S."/>
            <person name="Martinez D."/>
            <person name="McCready P.M."/>
            <person name="Medina C."/>
            <person name="Morgan J."/>
            <person name="Nelson K."/>
            <person name="Nolan M."/>
            <person name="Ovcharenko I."/>
            <person name="Pitluck S."/>
            <person name="Pollard M."/>
            <person name="Popkie A.P."/>
            <person name="Predki P."/>
            <person name="Quan G."/>
            <person name="Ramirez L."/>
            <person name="Rash S."/>
            <person name="Retterer J."/>
            <person name="Rodriguez A."/>
            <person name="Rogers S."/>
            <person name="Salamov A."/>
            <person name="Salazar A."/>
            <person name="She X."/>
            <person name="Smith D."/>
            <person name="Slezak T."/>
            <person name="Solovyev V."/>
            <person name="Thayer N."/>
            <person name="Tice H."/>
            <person name="Tsai M."/>
            <person name="Ustaszewska A."/>
            <person name="Vo N."/>
            <person name="Wagner M."/>
            <person name="Wheeler J."/>
            <person name="Wu K."/>
            <person name="Xie G."/>
            <person name="Yang J."/>
            <person name="Dubchak I."/>
            <person name="Furey T.S."/>
            <person name="DeJong P."/>
            <person name="Dickson M."/>
            <person name="Gordon D."/>
            <person name="Eichler E.E."/>
            <person name="Pennacchio L.A."/>
            <person name="Richardson P."/>
            <person name="Stubbs L."/>
            <person name="Rokhsar D.S."/>
            <person name="Myers R.M."/>
            <person name="Rubin E.M."/>
            <person name="Lucas S.M."/>
        </authorList>
    </citation>
    <scope>NUCLEOTIDE SEQUENCE [LARGE SCALE GENOMIC DNA]</scope>
</reference>
<protein>
    <recommendedName>
        <fullName evidence="3">Zinc finger protein 723</fullName>
    </recommendedName>
</protein>
<sequence length="513" mass="59152">MGPLTFTDVAIKFSLEEWQFLDTAQQNLYRDVMLENYRNLVFLGVGVSKPDLITCLEQGKEPWNMKRHKMVAKPPVVCSHFAQDLWPEQGIKDSFQKVILRSYGKYGHDNLQLRKGCESVDECKMHKGGYDELKQCLTTTPSKIFQCDKYVKVFHKFSSSNSQKIRHTGNNSFKCKECGKSFCMLSHLTKHERNHTRVNCYKCEECGKAFSVPSKLNNHKRIHTGEKPYKCEECGKAFNVSSSLNNHKRIHTGEKPYKCEECGKTFNMFSSLNNHKRIHTGEKPYKCKECGKAFNVFSSLNNHKRIHTGEKPYKCEECGKAFNQPSHLATHKRIHTGEKLYKCEECGKAFSQSSHITTHKRIHTGEKPYKCEECGKAFKVSVHLTTHKRIHTGEKPYKCEECGKAFNQSSALTTHKIIHTGERPYKCKQCGKGFSQSSTLTKHKIIHTKEKPYKCEECGKAFNQYSTLNKHKIIHAREKPYKCEECGKAFNKSSILNRHKIIHTKEKSQTLKM</sequence>
<feature type="chain" id="PRO_0000442922" description="Zinc finger protein 723">
    <location>
        <begin position="1"/>
        <end position="513"/>
    </location>
</feature>
<feature type="domain" description="KRAB" evidence="2">
    <location>
        <begin position="4"/>
        <end position="75"/>
    </location>
</feature>
<feature type="zinc finger region" description="C2H2-type 1" evidence="1">
    <location>
        <begin position="173"/>
        <end position="195"/>
    </location>
</feature>
<feature type="zinc finger region" description="C2H2-type 2" evidence="1">
    <location>
        <begin position="201"/>
        <end position="223"/>
    </location>
</feature>
<feature type="zinc finger region" description="C2H2-type 3" evidence="1">
    <location>
        <begin position="229"/>
        <end position="251"/>
    </location>
</feature>
<feature type="zinc finger region" description="C2H2-type 4" evidence="1">
    <location>
        <begin position="257"/>
        <end position="279"/>
    </location>
</feature>
<feature type="zinc finger region" description="C2H2-type 5" evidence="1">
    <location>
        <begin position="285"/>
        <end position="307"/>
    </location>
</feature>
<feature type="zinc finger region" description="C2H2-type 6" evidence="1">
    <location>
        <begin position="313"/>
        <end position="335"/>
    </location>
</feature>
<feature type="zinc finger region" description="C2H2-type 7" evidence="1">
    <location>
        <begin position="341"/>
        <end position="363"/>
    </location>
</feature>
<feature type="zinc finger region" description="C2H2-type 8" evidence="1">
    <location>
        <begin position="369"/>
        <end position="391"/>
    </location>
</feature>
<feature type="zinc finger region" description="C2H2-type 9" evidence="1">
    <location>
        <begin position="397"/>
        <end position="419"/>
    </location>
</feature>
<feature type="zinc finger region" description="C2H2-type 10" evidence="1">
    <location>
        <begin position="425"/>
        <end position="447"/>
    </location>
</feature>
<feature type="zinc finger region" description="C2H2-type 11" evidence="1">
    <location>
        <begin position="453"/>
        <end position="475"/>
    </location>
</feature>
<feature type="zinc finger region" description="C2H2-type 12" evidence="1">
    <location>
        <begin position="481"/>
        <end position="503"/>
    </location>
</feature>
<proteinExistence type="inferred from homology"/>
<accession>P0DPD5</accession>
<dbReference type="EMBL" id="AC008626">
    <property type="status" value="NOT_ANNOTATED_CDS"/>
    <property type="molecule type" value="Genomic_DNA"/>
</dbReference>
<dbReference type="EMBL" id="AC022145">
    <property type="status" value="NOT_ANNOTATED_CDS"/>
    <property type="molecule type" value="Genomic_DNA"/>
</dbReference>
<dbReference type="CCDS" id="CCDS86735.1"/>
<dbReference type="RefSeq" id="NP_001336655.1">
    <property type="nucleotide sequence ID" value="NM_001349726.2"/>
</dbReference>
<dbReference type="RefSeq" id="XP_024307420.1">
    <property type="nucleotide sequence ID" value="XM_024451652.2"/>
</dbReference>
<dbReference type="RefSeq" id="XP_047295179.1">
    <property type="nucleotide sequence ID" value="XM_047439223.1"/>
</dbReference>
<dbReference type="RefSeq" id="XP_047295180.1">
    <property type="nucleotide sequence ID" value="XM_047439224.1"/>
</dbReference>
<dbReference type="RefSeq" id="XP_054177749.1">
    <property type="nucleotide sequence ID" value="XM_054321774.1"/>
</dbReference>
<dbReference type="RefSeq" id="XP_054177750.1">
    <property type="nucleotide sequence ID" value="XM_054321775.1"/>
</dbReference>
<dbReference type="RefSeq" id="XP_054177751.1">
    <property type="nucleotide sequence ID" value="XM_054321776.1"/>
</dbReference>
<dbReference type="SMR" id="P0DPD5"/>
<dbReference type="STRING" id="9606.ENSP00000494306"/>
<dbReference type="iPTMnet" id="P0DPD5"/>
<dbReference type="PhosphoSitePlus" id="P0DPD5"/>
<dbReference type="jPOST" id="P0DPD5"/>
<dbReference type="MassIVE" id="P0DPD5"/>
<dbReference type="PeptideAtlas" id="P0DPD5"/>
<dbReference type="Ensembl" id="ENST00000600766.3">
    <property type="protein sequence ID" value="ENSP00000494306.1"/>
    <property type="gene ID" value="ENSG00000268696.3"/>
</dbReference>
<dbReference type="GeneID" id="646864"/>
<dbReference type="MANE-Select" id="ENST00000600766.3">
    <property type="protein sequence ID" value="ENSP00000494306.1"/>
    <property type="RefSeq nucleotide sequence ID" value="NM_001349726.2"/>
    <property type="RefSeq protein sequence ID" value="NP_001336655.1"/>
</dbReference>
<dbReference type="AGR" id="HGNC:32286"/>
<dbReference type="GeneCards" id="ZNF723"/>
<dbReference type="HGNC" id="HGNC:32286">
    <property type="gene designation" value="ZNF723"/>
</dbReference>
<dbReference type="HPA" id="ENSG00000268696">
    <property type="expression patterns" value="Tissue enriched (testis)"/>
</dbReference>
<dbReference type="neXtProt" id="NX_P0DPD5"/>
<dbReference type="OpenTargets" id="ENSG00000268696"/>
<dbReference type="VEuPathDB" id="HostDB:ENSG00000268696"/>
<dbReference type="GeneTree" id="ENSGT01130000278311"/>
<dbReference type="InParanoid" id="P0DPD5"/>
<dbReference type="OMA" id="FKIRTHL"/>
<dbReference type="OrthoDB" id="1095242at2759"/>
<dbReference type="PAN-GO" id="P0DPD5">
    <property type="GO annotations" value="3 GO annotations based on evolutionary models"/>
</dbReference>
<dbReference type="Pharos" id="P0DPD5">
    <property type="development level" value="Tdark"/>
</dbReference>
<dbReference type="PRO" id="PR:P0DPD5"/>
<dbReference type="Proteomes" id="UP000005640">
    <property type="component" value="Chromosome 19"/>
</dbReference>
<dbReference type="Bgee" id="ENSG00000268696">
    <property type="expression patterns" value="Expressed in primordial germ cell in gonad and 17 other cell types or tissues"/>
</dbReference>
<dbReference type="GO" id="GO:0005634">
    <property type="term" value="C:nucleus"/>
    <property type="evidence" value="ECO:0007669"/>
    <property type="project" value="UniProtKB-SubCell"/>
</dbReference>
<dbReference type="GO" id="GO:0000981">
    <property type="term" value="F:DNA-binding transcription factor activity, RNA polymerase II-specific"/>
    <property type="evidence" value="ECO:0000318"/>
    <property type="project" value="GO_Central"/>
</dbReference>
<dbReference type="GO" id="GO:0000978">
    <property type="term" value="F:RNA polymerase II cis-regulatory region sequence-specific DNA binding"/>
    <property type="evidence" value="ECO:0000318"/>
    <property type="project" value="GO_Central"/>
</dbReference>
<dbReference type="GO" id="GO:0008270">
    <property type="term" value="F:zinc ion binding"/>
    <property type="evidence" value="ECO:0007669"/>
    <property type="project" value="UniProtKB-KW"/>
</dbReference>
<dbReference type="GO" id="GO:0006355">
    <property type="term" value="P:regulation of DNA-templated transcription"/>
    <property type="evidence" value="ECO:0000318"/>
    <property type="project" value="GO_Central"/>
</dbReference>
<dbReference type="CDD" id="cd07765">
    <property type="entry name" value="KRAB_A-box"/>
    <property type="match status" value="1"/>
</dbReference>
<dbReference type="FunFam" id="3.30.160.60:FF:001737">
    <property type="entry name" value="Zinc finger protein 100"/>
    <property type="match status" value="3"/>
</dbReference>
<dbReference type="FunFam" id="3.30.160.60:FF:000374">
    <property type="entry name" value="Zinc finger protein 208"/>
    <property type="match status" value="1"/>
</dbReference>
<dbReference type="FunFam" id="3.30.160.60:FF:001868">
    <property type="entry name" value="Zinc finger protein 264"/>
    <property type="match status" value="2"/>
</dbReference>
<dbReference type="FunFam" id="3.30.160.60:FF:000120">
    <property type="entry name" value="Zinc finger protein 430"/>
    <property type="match status" value="4"/>
</dbReference>
<dbReference type="FunFam" id="3.30.160.60:FF:000895">
    <property type="entry name" value="Zinc finger protein 597"/>
    <property type="match status" value="1"/>
</dbReference>
<dbReference type="FunFam" id="3.30.160.60:FF:000307">
    <property type="entry name" value="Zinc finger protein ZFP69 isoform 1"/>
    <property type="match status" value="1"/>
</dbReference>
<dbReference type="Gene3D" id="6.10.140.140">
    <property type="match status" value="1"/>
</dbReference>
<dbReference type="Gene3D" id="3.30.160.60">
    <property type="entry name" value="Classic Zinc Finger"/>
    <property type="match status" value="12"/>
</dbReference>
<dbReference type="InterPro" id="IPR001909">
    <property type="entry name" value="KRAB"/>
</dbReference>
<dbReference type="InterPro" id="IPR036051">
    <property type="entry name" value="KRAB_dom_sf"/>
</dbReference>
<dbReference type="InterPro" id="IPR036236">
    <property type="entry name" value="Znf_C2H2_sf"/>
</dbReference>
<dbReference type="InterPro" id="IPR013087">
    <property type="entry name" value="Znf_C2H2_type"/>
</dbReference>
<dbReference type="PANTHER" id="PTHR24394">
    <property type="entry name" value="ZINC FINGER PROTEIN"/>
    <property type="match status" value="1"/>
</dbReference>
<dbReference type="PANTHER" id="PTHR24394:SF48">
    <property type="entry name" value="ZINC FINGER PROTEIN 771"/>
    <property type="match status" value="1"/>
</dbReference>
<dbReference type="Pfam" id="PF01352">
    <property type="entry name" value="KRAB"/>
    <property type="match status" value="1"/>
</dbReference>
<dbReference type="Pfam" id="PF00096">
    <property type="entry name" value="zf-C2H2"/>
    <property type="match status" value="10"/>
</dbReference>
<dbReference type="Pfam" id="PF13465">
    <property type="entry name" value="zf-H2C2_2"/>
    <property type="match status" value="1"/>
</dbReference>
<dbReference type="SMART" id="SM00349">
    <property type="entry name" value="KRAB"/>
    <property type="match status" value="1"/>
</dbReference>
<dbReference type="SMART" id="SM00355">
    <property type="entry name" value="ZnF_C2H2"/>
    <property type="match status" value="12"/>
</dbReference>
<dbReference type="SUPFAM" id="SSF57667">
    <property type="entry name" value="beta-beta-alpha zinc fingers"/>
    <property type="match status" value="7"/>
</dbReference>
<dbReference type="SUPFAM" id="SSF109640">
    <property type="entry name" value="KRAB domain (Kruppel-associated box)"/>
    <property type="match status" value="1"/>
</dbReference>
<dbReference type="PROSITE" id="PS50805">
    <property type="entry name" value="KRAB"/>
    <property type="match status" value="1"/>
</dbReference>
<dbReference type="PROSITE" id="PS00028">
    <property type="entry name" value="ZINC_FINGER_C2H2_1"/>
    <property type="match status" value="12"/>
</dbReference>
<dbReference type="PROSITE" id="PS50157">
    <property type="entry name" value="ZINC_FINGER_C2H2_2"/>
    <property type="match status" value="12"/>
</dbReference>
<name>ZN723_HUMAN</name>
<organism>
    <name type="scientific">Homo sapiens</name>
    <name type="common">Human</name>
    <dbReference type="NCBI Taxonomy" id="9606"/>
    <lineage>
        <taxon>Eukaryota</taxon>
        <taxon>Metazoa</taxon>
        <taxon>Chordata</taxon>
        <taxon>Craniata</taxon>
        <taxon>Vertebrata</taxon>
        <taxon>Euteleostomi</taxon>
        <taxon>Mammalia</taxon>
        <taxon>Eutheria</taxon>
        <taxon>Euarchontoglires</taxon>
        <taxon>Primates</taxon>
        <taxon>Haplorrhini</taxon>
        <taxon>Catarrhini</taxon>
        <taxon>Hominidae</taxon>
        <taxon>Homo</taxon>
    </lineage>
</organism>
<keyword id="KW-0238">DNA-binding</keyword>
<keyword id="KW-0479">Metal-binding</keyword>
<keyword id="KW-0539">Nucleus</keyword>
<keyword id="KW-1185">Reference proteome</keyword>
<keyword id="KW-0677">Repeat</keyword>
<keyword id="KW-0804">Transcription</keyword>
<keyword id="KW-0805">Transcription regulation</keyword>
<keyword id="KW-0862">Zinc</keyword>
<keyword id="KW-0863">Zinc-finger</keyword>